<dbReference type="EC" id="6.1.1.20" evidence="1"/>
<dbReference type="EMBL" id="CP000034">
    <property type="protein sequence ID" value="ABB61919.1"/>
    <property type="molecule type" value="Genomic_DNA"/>
</dbReference>
<dbReference type="RefSeq" id="WP_000672334.1">
    <property type="nucleotide sequence ID" value="NC_007606.1"/>
</dbReference>
<dbReference type="RefSeq" id="YP_403410.1">
    <property type="nucleotide sequence ID" value="NC_007606.1"/>
</dbReference>
<dbReference type="SMR" id="Q32FI6"/>
<dbReference type="STRING" id="300267.SDY_1808"/>
<dbReference type="EnsemblBacteria" id="ABB61919">
    <property type="protein sequence ID" value="ABB61919"/>
    <property type="gene ID" value="SDY_1808"/>
</dbReference>
<dbReference type="KEGG" id="sdy:SDY_1808"/>
<dbReference type="PATRIC" id="fig|300267.13.peg.2180"/>
<dbReference type="HOGENOM" id="CLU_016891_0_0_6"/>
<dbReference type="Proteomes" id="UP000002716">
    <property type="component" value="Chromosome"/>
</dbReference>
<dbReference type="GO" id="GO:0009328">
    <property type="term" value="C:phenylalanine-tRNA ligase complex"/>
    <property type="evidence" value="ECO:0007669"/>
    <property type="project" value="TreeGrafter"/>
</dbReference>
<dbReference type="GO" id="GO:0005524">
    <property type="term" value="F:ATP binding"/>
    <property type="evidence" value="ECO:0007669"/>
    <property type="project" value="UniProtKB-UniRule"/>
</dbReference>
<dbReference type="GO" id="GO:0000287">
    <property type="term" value="F:magnesium ion binding"/>
    <property type="evidence" value="ECO:0007669"/>
    <property type="project" value="UniProtKB-UniRule"/>
</dbReference>
<dbReference type="GO" id="GO:0004826">
    <property type="term" value="F:phenylalanine-tRNA ligase activity"/>
    <property type="evidence" value="ECO:0007669"/>
    <property type="project" value="UniProtKB-UniRule"/>
</dbReference>
<dbReference type="GO" id="GO:0000049">
    <property type="term" value="F:tRNA binding"/>
    <property type="evidence" value="ECO:0007669"/>
    <property type="project" value="UniProtKB-KW"/>
</dbReference>
<dbReference type="GO" id="GO:0006432">
    <property type="term" value="P:phenylalanyl-tRNA aminoacylation"/>
    <property type="evidence" value="ECO:0007669"/>
    <property type="project" value="UniProtKB-UniRule"/>
</dbReference>
<dbReference type="CDD" id="cd00769">
    <property type="entry name" value="PheRS_beta_core"/>
    <property type="match status" value="1"/>
</dbReference>
<dbReference type="CDD" id="cd02796">
    <property type="entry name" value="tRNA_bind_bactPheRS"/>
    <property type="match status" value="1"/>
</dbReference>
<dbReference type="FunFam" id="2.40.50.140:FF:000045">
    <property type="entry name" value="Phenylalanine--tRNA ligase beta subunit"/>
    <property type="match status" value="1"/>
</dbReference>
<dbReference type="FunFam" id="3.30.56.10:FF:000002">
    <property type="entry name" value="Phenylalanine--tRNA ligase beta subunit"/>
    <property type="match status" value="1"/>
</dbReference>
<dbReference type="FunFam" id="3.30.70.380:FF:000001">
    <property type="entry name" value="Phenylalanine--tRNA ligase beta subunit"/>
    <property type="match status" value="1"/>
</dbReference>
<dbReference type="FunFam" id="3.30.930.10:FF:000022">
    <property type="entry name" value="Phenylalanine--tRNA ligase beta subunit"/>
    <property type="match status" value="1"/>
</dbReference>
<dbReference type="FunFam" id="3.50.40.10:FF:000001">
    <property type="entry name" value="Phenylalanine--tRNA ligase beta subunit"/>
    <property type="match status" value="1"/>
</dbReference>
<dbReference type="Gene3D" id="3.30.56.10">
    <property type="match status" value="2"/>
</dbReference>
<dbReference type="Gene3D" id="3.30.930.10">
    <property type="entry name" value="Bira Bifunctional Protein, Domain 2"/>
    <property type="match status" value="1"/>
</dbReference>
<dbReference type="Gene3D" id="3.30.70.380">
    <property type="entry name" value="Ferrodoxin-fold anticodon-binding domain"/>
    <property type="match status" value="1"/>
</dbReference>
<dbReference type="Gene3D" id="2.40.50.140">
    <property type="entry name" value="Nucleic acid-binding proteins"/>
    <property type="match status" value="1"/>
</dbReference>
<dbReference type="Gene3D" id="3.50.40.10">
    <property type="entry name" value="Phenylalanyl-trna Synthetase, Chain B, domain 3"/>
    <property type="match status" value="1"/>
</dbReference>
<dbReference type="HAMAP" id="MF_00283">
    <property type="entry name" value="Phe_tRNA_synth_beta1"/>
    <property type="match status" value="1"/>
</dbReference>
<dbReference type="InterPro" id="IPR045864">
    <property type="entry name" value="aa-tRNA-synth_II/BPL/LPL"/>
</dbReference>
<dbReference type="InterPro" id="IPR005146">
    <property type="entry name" value="B3/B4_tRNA-bd"/>
</dbReference>
<dbReference type="InterPro" id="IPR009061">
    <property type="entry name" value="DNA-bd_dom_put_sf"/>
</dbReference>
<dbReference type="InterPro" id="IPR005121">
    <property type="entry name" value="Fdx_antiC-bd"/>
</dbReference>
<dbReference type="InterPro" id="IPR036690">
    <property type="entry name" value="Fdx_antiC-bd_sf"/>
</dbReference>
<dbReference type="InterPro" id="IPR012340">
    <property type="entry name" value="NA-bd_OB-fold"/>
</dbReference>
<dbReference type="InterPro" id="IPR045060">
    <property type="entry name" value="Phe-tRNA-ligase_IIc_bsu"/>
</dbReference>
<dbReference type="InterPro" id="IPR004532">
    <property type="entry name" value="Phe-tRNA-ligase_IIc_bsu_bact"/>
</dbReference>
<dbReference type="InterPro" id="IPR020825">
    <property type="entry name" value="Phe-tRNA_synthase-like_B3/B4"/>
</dbReference>
<dbReference type="InterPro" id="IPR041616">
    <property type="entry name" value="PheRS_beta_core"/>
</dbReference>
<dbReference type="InterPro" id="IPR002547">
    <property type="entry name" value="tRNA-bd_dom"/>
</dbReference>
<dbReference type="InterPro" id="IPR033714">
    <property type="entry name" value="tRNA_bind_bactPheRS"/>
</dbReference>
<dbReference type="InterPro" id="IPR005147">
    <property type="entry name" value="tRNA_synthase_B5-dom"/>
</dbReference>
<dbReference type="NCBIfam" id="TIGR00472">
    <property type="entry name" value="pheT_bact"/>
    <property type="match status" value="1"/>
</dbReference>
<dbReference type="NCBIfam" id="NF045760">
    <property type="entry name" value="YtpR"/>
    <property type="match status" value="1"/>
</dbReference>
<dbReference type="PANTHER" id="PTHR10947:SF0">
    <property type="entry name" value="PHENYLALANINE--TRNA LIGASE BETA SUBUNIT"/>
    <property type="match status" value="1"/>
</dbReference>
<dbReference type="PANTHER" id="PTHR10947">
    <property type="entry name" value="PHENYLALANYL-TRNA SYNTHETASE BETA CHAIN AND LEUCINE-RICH REPEAT-CONTAINING PROTEIN 47"/>
    <property type="match status" value="1"/>
</dbReference>
<dbReference type="Pfam" id="PF03483">
    <property type="entry name" value="B3_4"/>
    <property type="match status" value="1"/>
</dbReference>
<dbReference type="Pfam" id="PF03484">
    <property type="entry name" value="B5"/>
    <property type="match status" value="1"/>
</dbReference>
<dbReference type="Pfam" id="PF03147">
    <property type="entry name" value="FDX-ACB"/>
    <property type="match status" value="1"/>
</dbReference>
<dbReference type="Pfam" id="PF01588">
    <property type="entry name" value="tRNA_bind"/>
    <property type="match status" value="1"/>
</dbReference>
<dbReference type="Pfam" id="PF17759">
    <property type="entry name" value="tRNA_synthFbeta"/>
    <property type="match status" value="1"/>
</dbReference>
<dbReference type="SMART" id="SM00873">
    <property type="entry name" value="B3_4"/>
    <property type="match status" value="1"/>
</dbReference>
<dbReference type="SMART" id="SM00874">
    <property type="entry name" value="B5"/>
    <property type="match status" value="1"/>
</dbReference>
<dbReference type="SMART" id="SM00896">
    <property type="entry name" value="FDX-ACB"/>
    <property type="match status" value="1"/>
</dbReference>
<dbReference type="SUPFAM" id="SSF54991">
    <property type="entry name" value="Anticodon-binding domain of PheRS"/>
    <property type="match status" value="1"/>
</dbReference>
<dbReference type="SUPFAM" id="SSF55681">
    <property type="entry name" value="Class II aaRS and biotin synthetases"/>
    <property type="match status" value="1"/>
</dbReference>
<dbReference type="SUPFAM" id="SSF50249">
    <property type="entry name" value="Nucleic acid-binding proteins"/>
    <property type="match status" value="1"/>
</dbReference>
<dbReference type="SUPFAM" id="SSF56037">
    <property type="entry name" value="PheT/TilS domain"/>
    <property type="match status" value="1"/>
</dbReference>
<dbReference type="SUPFAM" id="SSF46955">
    <property type="entry name" value="Putative DNA-binding domain"/>
    <property type="match status" value="1"/>
</dbReference>
<dbReference type="PROSITE" id="PS51483">
    <property type="entry name" value="B5"/>
    <property type="match status" value="1"/>
</dbReference>
<dbReference type="PROSITE" id="PS51447">
    <property type="entry name" value="FDX_ACB"/>
    <property type="match status" value="1"/>
</dbReference>
<dbReference type="PROSITE" id="PS50886">
    <property type="entry name" value="TRBD"/>
    <property type="match status" value="1"/>
</dbReference>
<keyword id="KW-0030">Aminoacyl-tRNA synthetase</keyword>
<keyword id="KW-0067">ATP-binding</keyword>
<keyword id="KW-0963">Cytoplasm</keyword>
<keyword id="KW-0436">Ligase</keyword>
<keyword id="KW-0460">Magnesium</keyword>
<keyword id="KW-0479">Metal-binding</keyword>
<keyword id="KW-0547">Nucleotide-binding</keyword>
<keyword id="KW-0648">Protein biosynthesis</keyword>
<keyword id="KW-1185">Reference proteome</keyword>
<keyword id="KW-0694">RNA-binding</keyword>
<keyword id="KW-0820">tRNA-binding</keyword>
<organism>
    <name type="scientific">Shigella dysenteriae serotype 1 (strain Sd197)</name>
    <dbReference type="NCBI Taxonomy" id="300267"/>
    <lineage>
        <taxon>Bacteria</taxon>
        <taxon>Pseudomonadati</taxon>
        <taxon>Pseudomonadota</taxon>
        <taxon>Gammaproteobacteria</taxon>
        <taxon>Enterobacterales</taxon>
        <taxon>Enterobacteriaceae</taxon>
        <taxon>Shigella</taxon>
    </lineage>
</organism>
<name>SYFB_SHIDS</name>
<comment type="catalytic activity">
    <reaction evidence="1">
        <text>tRNA(Phe) + L-phenylalanine + ATP = L-phenylalanyl-tRNA(Phe) + AMP + diphosphate + H(+)</text>
        <dbReference type="Rhea" id="RHEA:19413"/>
        <dbReference type="Rhea" id="RHEA-COMP:9668"/>
        <dbReference type="Rhea" id="RHEA-COMP:9699"/>
        <dbReference type="ChEBI" id="CHEBI:15378"/>
        <dbReference type="ChEBI" id="CHEBI:30616"/>
        <dbReference type="ChEBI" id="CHEBI:33019"/>
        <dbReference type="ChEBI" id="CHEBI:58095"/>
        <dbReference type="ChEBI" id="CHEBI:78442"/>
        <dbReference type="ChEBI" id="CHEBI:78531"/>
        <dbReference type="ChEBI" id="CHEBI:456215"/>
        <dbReference type="EC" id="6.1.1.20"/>
    </reaction>
</comment>
<comment type="cofactor">
    <cofactor evidence="1">
        <name>Mg(2+)</name>
        <dbReference type="ChEBI" id="CHEBI:18420"/>
    </cofactor>
    <text evidence="1">Binds 2 magnesium ions per tetramer.</text>
</comment>
<comment type="subunit">
    <text evidence="1">Tetramer of two alpha and two beta subunits.</text>
</comment>
<comment type="subcellular location">
    <subcellularLocation>
        <location evidence="1">Cytoplasm</location>
    </subcellularLocation>
</comment>
<comment type="similarity">
    <text evidence="1">Belongs to the phenylalanyl-tRNA synthetase beta subunit family. Type 1 subfamily.</text>
</comment>
<feature type="chain" id="PRO_0000232087" description="Phenylalanine--tRNA ligase beta subunit">
    <location>
        <begin position="1"/>
        <end position="795"/>
    </location>
</feature>
<feature type="domain" description="tRNA-binding" evidence="1">
    <location>
        <begin position="39"/>
        <end position="148"/>
    </location>
</feature>
<feature type="domain" description="B5" evidence="1">
    <location>
        <begin position="401"/>
        <end position="476"/>
    </location>
</feature>
<feature type="domain" description="FDX-ACB" evidence="1">
    <location>
        <begin position="701"/>
        <end position="794"/>
    </location>
</feature>
<feature type="binding site" evidence="1">
    <location>
        <position position="454"/>
    </location>
    <ligand>
        <name>Mg(2+)</name>
        <dbReference type="ChEBI" id="CHEBI:18420"/>
        <note>shared with alpha subunit</note>
    </ligand>
</feature>
<feature type="binding site" evidence="1">
    <location>
        <position position="460"/>
    </location>
    <ligand>
        <name>Mg(2+)</name>
        <dbReference type="ChEBI" id="CHEBI:18420"/>
        <note>shared with alpha subunit</note>
    </ligand>
</feature>
<feature type="binding site" evidence="1">
    <location>
        <position position="463"/>
    </location>
    <ligand>
        <name>Mg(2+)</name>
        <dbReference type="ChEBI" id="CHEBI:18420"/>
        <note>shared with alpha subunit</note>
    </ligand>
</feature>
<feature type="binding site" evidence="1">
    <location>
        <position position="464"/>
    </location>
    <ligand>
        <name>Mg(2+)</name>
        <dbReference type="ChEBI" id="CHEBI:18420"/>
        <note>shared with alpha subunit</note>
    </ligand>
</feature>
<reference key="1">
    <citation type="journal article" date="2005" name="Nucleic Acids Res.">
        <title>Genome dynamics and diversity of Shigella species, the etiologic agents of bacillary dysentery.</title>
        <authorList>
            <person name="Yang F."/>
            <person name="Yang J."/>
            <person name="Zhang X."/>
            <person name="Chen L."/>
            <person name="Jiang Y."/>
            <person name="Yan Y."/>
            <person name="Tang X."/>
            <person name="Wang J."/>
            <person name="Xiong Z."/>
            <person name="Dong J."/>
            <person name="Xue Y."/>
            <person name="Zhu Y."/>
            <person name="Xu X."/>
            <person name="Sun L."/>
            <person name="Chen S."/>
            <person name="Nie H."/>
            <person name="Peng J."/>
            <person name="Xu J."/>
            <person name="Wang Y."/>
            <person name="Yuan Z."/>
            <person name="Wen Y."/>
            <person name="Yao Z."/>
            <person name="Shen Y."/>
            <person name="Qiang B."/>
            <person name="Hou Y."/>
            <person name="Yu J."/>
            <person name="Jin Q."/>
        </authorList>
    </citation>
    <scope>NUCLEOTIDE SEQUENCE [LARGE SCALE GENOMIC DNA]</scope>
    <source>
        <strain>Sd197</strain>
    </source>
</reference>
<gene>
    <name evidence="1" type="primary">pheT</name>
    <name type="ordered locus">SDY_1808</name>
</gene>
<protein>
    <recommendedName>
        <fullName evidence="1">Phenylalanine--tRNA ligase beta subunit</fullName>
        <ecNumber evidence="1">6.1.1.20</ecNumber>
    </recommendedName>
    <alternativeName>
        <fullName evidence="1">Phenylalanyl-tRNA synthetase beta subunit</fullName>
        <shortName evidence="1">PheRS</shortName>
    </alternativeName>
</protein>
<sequence length="795" mass="87371">MKFSELWLREWVNPAIDSDALANQITMAGLEVDGVEPVAGSFHGVVVGEVVECAQHPNADKLRVTKVNVGGDRLLDIVCGAPNCRQGLRVAVATIGAVLPGDFKIKAAKLRGEPSEGMLCSFSELGISDDHNGIIELPADAPIGTDIREYLKLDDNTIEISVTPNRADCLGIIGVARDVAVLNQLPLVEPEIVPVGATIDDTLPITVEAPEACSRYLGRVVKGINVKAPTPLWMKEKLRRCGIRSIDAVVDVTNYVLLELGQPMHAFDKDRIEGGIVVRMAKEGETLVLLDGTEAKLNADTLVIADHNKALAMGGIFGGEHSGVNDETQNVLLECAFFSPLSITGRARRHGLHTDASHRYERGVDPALQHKAMERATCLLIDICGGEAGPVIDITNEATLPKRATITLRRSKLDRLIGHHIADEQVTDILRRLGCEVTEGKDEWQAVAPSWRFDMEIEEDLVEEVARVYGYNNIPDEPVQASLIMGTHREADLSLKRVKTLLNDKGYQEVITYSFVDPKVQQMIHPGVEALLLPSPISVEMSAMRLSLWTGLLATVVYNQNRQQNRVRIFESGLRFVPDTQAPLGIRQDLMLAGVICGNRYEEHWNLAKETVDFYDLKGDLESVLDLTGKLNEVEFRAEANPALHPGQSAAIYLKGERIGFVGVVHPELERKLDLNGRTLVFELEWNKLADRVVPQAREISRFPANRRDIAVVVAENVPAVDILSECKKVGVNQVVGVNLFDVYRGKGVAEGYKSLAISLILQDTSRTLEEEEIAATVAKCVEALKERFQASLRD</sequence>
<proteinExistence type="inferred from homology"/>
<evidence type="ECO:0000255" key="1">
    <source>
        <dbReference type="HAMAP-Rule" id="MF_00283"/>
    </source>
</evidence>
<accession>Q32FI6</accession>